<dbReference type="EMBL" id="CU329672">
    <property type="protein sequence ID" value="CAA19301.1"/>
    <property type="molecule type" value="Genomic_DNA"/>
</dbReference>
<dbReference type="PIR" id="T41004">
    <property type="entry name" value="T41004"/>
</dbReference>
<dbReference type="RefSeq" id="NP_588528.1">
    <property type="nucleotide sequence ID" value="NM_001023516.2"/>
</dbReference>
<dbReference type="SMR" id="O60077"/>
<dbReference type="BioGRID" id="275905">
    <property type="interactions" value="10"/>
</dbReference>
<dbReference type="FunCoup" id="O60077">
    <property type="interactions" value="414"/>
</dbReference>
<dbReference type="STRING" id="284812.O60077"/>
<dbReference type="PaxDb" id="4896-SPCC1494.03.1"/>
<dbReference type="EnsemblFungi" id="SPCC1494.03.1">
    <property type="protein sequence ID" value="SPCC1494.03.1:pep"/>
    <property type="gene ID" value="SPCC1494.03"/>
</dbReference>
<dbReference type="GeneID" id="2539339"/>
<dbReference type="KEGG" id="spo:2539339"/>
<dbReference type="PomBase" id="SPCC1494.03">
    <property type="gene designation" value="arz1"/>
</dbReference>
<dbReference type="VEuPathDB" id="FungiDB:SPCC1494.03"/>
<dbReference type="eggNOG" id="KOG4500">
    <property type="taxonomic scope" value="Eukaryota"/>
</dbReference>
<dbReference type="HOGENOM" id="CLU_554504_0_0_1"/>
<dbReference type="InParanoid" id="O60077"/>
<dbReference type="OMA" id="VAILMIK"/>
<dbReference type="PRO" id="PR:O60077"/>
<dbReference type="Proteomes" id="UP000002485">
    <property type="component" value="Chromosome III"/>
</dbReference>
<dbReference type="GO" id="GO:0005829">
    <property type="term" value="C:cytosol"/>
    <property type="evidence" value="ECO:0007005"/>
    <property type="project" value="PomBase"/>
</dbReference>
<dbReference type="GO" id="GO:0044732">
    <property type="term" value="C:mitotic spindle pole body"/>
    <property type="evidence" value="ECO:0007005"/>
    <property type="project" value="PomBase"/>
</dbReference>
<dbReference type="GO" id="GO:0005634">
    <property type="term" value="C:nucleus"/>
    <property type="evidence" value="ECO:0007005"/>
    <property type="project" value="PomBase"/>
</dbReference>
<dbReference type="GO" id="GO:0005085">
    <property type="term" value="F:guanyl-nucleotide exchange factor activity"/>
    <property type="evidence" value="ECO:0000250"/>
    <property type="project" value="UniProtKB"/>
</dbReference>
<dbReference type="GO" id="GO:0030010">
    <property type="term" value="P:establishment of cell polarity"/>
    <property type="evidence" value="ECO:0000266"/>
    <property type="project" value="PomBase"/>
</dbReference>
<dbReference type="Gene3D" id="1.25.10.10">
    <property type="entry name" value="Leucine-rich Repeat Variant"/>
    <property type="match status" value="1"/>
</dbReference>
<dbReference type="InterPro" id="IPR011989">
    <property type="entry name" value="ARM-like"/>
</dbReference>
<dbReference type="InterPro" id="IPR016024">
    <property type="entry name" value="ARM-type_fold"/>
</dbReference>
<dbReference type="InterPro" id="IPR040144">
    <property type="entry name" value="RAP1GDS1"/>
</dbReference>
<dbReference type="PANTHER" id="PTHR10957">
    <property type="entry name" value="RAP1 GTPASE-GDP DISSOCIATION STIMULATOR 1"/>
    <property type="match status" value="1"/>
</dbReference>
<dbReference type="SUPFAM" id="SSF48371">
    <property type="entry name" value="ARM repeat"/>
    <property type="match status" value="1"/>
</dbReference>
<proteinExistence type="inferred from homology"/>
<accession>O60077</accession>
<evidence type="ECO:0000250" key="1">
    <source>
        <dbReference type="UniProtKB" id="P39011"/>
    </source>
</evidence>
<evidence type="ECO:0000250" key="2">
    <source>
        <dbReference type="UniProtKB" id="P52306"/>
    </source>
</evidence>
<evidence type="ECO:0000269" key="3">
    <source>
    </source>
</evidence>
<evidence type="ECO:0000303" key="4">
    <source>
    </source>
</evidence>
<evidence type="ECO:0000312" key="5">
    <source>
        <dbReference type="PomBase" id="SPCC1494.03"/>
    </source>
</evidence>
<organism>
    <name type="scientific">Schizosaccharomyces pombe (strain 972 / ATCC 24843)</name>
    <name type="common">Fission yeast</name>
    <dbReference type="NCBI Taxonomy" id="284812"/>
    <lineage>
        <taxon>Eukaryota</taxon>
        <taxon>Fungi</taxon>
        <taxon>Dikarya</taxon>
        <taxon>Ascomycota</taxon>
        <taxon>Taphrinomycotina</taxon>
        <taxon>Schizosaccharomycetes</taxon>
        <taxon>Schizosaccharomycetales</taxon>
        <taxon>Schizosaccharomycetaceae</taxon>
        <taxon>Schizosaccharomyces</taxon>
    </lineage>
</organism>
<name>GDS1_SCHPO</name>
<sequence>MTASDTVYLFQSLADRSKNPQERSLFRNYISEALELLRETPSSPTVVHEQCFRFLANSCSDNNENRAAFFNLGGIDVLKPYCSKDNEYSALAFAVIHNCILDSREYRAQVADAQILNLAITYWIDWQHKLKAPFFNMLSFVCEMLYPFCKDCSLVFMGLQLLPSMVREGIDPFTIFAKAFDNSLVCVSFAQNPSMLIDSIDLVRNMPDFTKKTDMLNLFPRIAEHDAVLSTSLHADPQFLDFLESCFRSDDSNSITMASLFIGNLVRRDDIAKQLMQKDFLNMLISCIMQEKDVDGNVERVYACCAALRHFMIPVSSRAHFAPTAILLQEKLASSRFTQLHYISASMIRLSMPYILCELADHPERFYKLKDWSKSPDFNLALESNRTLLGFVKHYLTVPKSKEKISAFFKNNINLFEESVVTVLSTESKYPIVIGEAVFVAILMIKHGYANVAQTIIASPVYEALKSYRDDPNLAYQLKQNVRSLLVLVEHR</sequence>
<keyword id="KW-0963">Cytoplasm</keyword>
<keyword id="KW-0344">Guanine-nucleotide releasing factor</keyword>
<keyword id="KW-0539">Nucleus</keyword>
<keyword id="KW-1185">Reference proteome</keyword>
<reference key="1">
    <citation type="journal article" date="2002" name="Nature">
        <title>The genome sequence of Schizosaccharomyces pombe.</title>
        <authorList>
            <person name="Wood V."/>
            <person name="Gwilliam R."/>
            <person name="Rajandream M.A."/>
            <person name="Lyne M.H."/>
            <person name="Lyne R."/>
            <person name="Stewart A."/>
            <person name="Sgouros J.G."/>
            <person name="Peat N."/>
            <person name="Hayles J."/>
            <person name="Baker S.G."/>
            <person name="Basham D."/>
            <person name="Bowman S."/>
            <person name="Brooks K."/>
            <person name="Brown D."/>
            <person name="Brown S."/>
            <person name="Chillingworth T."/>
            <person name="Churcher C.M."/>
            <person name="Collins M."/>
            <person name="Connor R."/>
            <person name="Cronin A."/>
            <person name="Davis P."/>
            <person name="Feltwell T."/>
            <person name="Fraser A."/>
            <person name="Gentles S."/>
            <person name="Goble A."/>
            <person name="Hamlin N."/>
            <person name="Harris D.E."/>
            <person name="Hidalgo J."/>
            <person name="Hodgson G."/>
            <person name="Holroyd S."/>
            <person name="Hornsby T."/>
            <person name="Howarth S."/>
            <person name="Huckle E.J."/>
            <person name="Hunt S."/>
            <person name="Jagels K."/>
            <person name="James K.D."/>
            <person name="Jones L."/>
            <person name="Jones M."/>
            <person name="Leather S."/>
            <person name="McDonald S."/>
            <person name="McLean J."/>
            <person name="Mooney P."/>
            <person name="Moule S."/>
            <person name="Mungall K.L."/>
            <person name="Murphy L.D."/>
            <person name="Niblett D."/>
            <person name="Odell C."/>
            <person name="Oliver K."/>
            <person name="O'Neil S."/>
            <person name="Pearson D."/>
            <person name="Quail M.A."/>
            <person name="Rabbinowitsch E."/>
            <person name="Rutherford K.M."/>
            <person name="Rutter S."/>
            <person name="Saunders D."/>
            <person name="Seeger K."/>
            <person name="Sharp S."/>
            <person name="Skelton J."/>
            <person name="Simmonds M.N."/>
            <person name="Squares R."/>
            <person name="Squares S."/>
            <person name="Stevens K."/>
            <person name="Taylor K."/>
            <person name="Taylor R.G."/>
            <person name="Tivey A."/>
            <person name="Walsh S.V."/>
            <person name="Warren T."/>
            <person name="Whitehead S."/>
            <person name="Woodward J.R."/>
            <person name="Volckaert G."/>
            <person name="Aert R."/>
            <person name="Robben J."/>
            <person name="Grymonprez B."/>
            <person name="Weltjens I."/>
            <person name="Vanstreels E."/>
            <person name="Rieger M."/>
            <person name="Schaefer M."/>
            <person name="Mueller-Auer S."/>
            <person name="Gabel C."/>
            <person name="Fuchs M."/>
            <person name="Duesterhoeft A."/>
            <person name="Fritzc C."/>
            <person name="Holzer E."/>
            <person name="Moestl D."/>
            <person name="Hilbert H."/>
            <person name="Borzym K."/>
            <person name="Langer I."/>
            <person name="Beck A."/>
            <person name="Lehrach H."/>
            <person name="Reinhardt R."/>
            <person name="Pohl T.M."/>
            <person name="Eger P."/>
            <person name="Zimmermann W."/>
            <person name="Wedler H."/>
            <person name="Wambutt R."/>
            <person name="Purnelle B."/>
            <person name="Goffeau A."/>
            <person name="Cadieu E."/>
            <person name="Dreano S."/>
            <person name="Gloux S."/>
            <person name="Lelaure V."/>
            <person name="Mottier S."/>
            <person name="Galibert F."/>
            <person name="Aves S.J."/>
            <person name="Xiang Z."/>
            <person name="Hunt C."/>
            <person name="Moore K."/>
            <person name="Hurst S.M."/>
            <person name="Lucas M."/>
            <person name="Rochet M."/>
            <person name="Gaillardin C."/>
            <person name="Tallada V.A."/>
            <person name="Garzon A."/>
            <person name="Thode G."/>
            <person name="Daga R.R."/>
            <person name="Cruzado L."/>
            <person name="Jimenez J."/>
            <person name="Sanchez M."/>
            <person name="del Rey F."/>
            <person name="Benito J."/>
            <person name="Dominguez A."/>
            <person name="Revuelta J.L."/>
            <person name="Moreno S."/>
            <person name="Armstrong J."/>
            <person name="Forsburg S.L."/>
            <person name="Cerutti L."/>
            <person name="Lowe T."/>
            <person name="McCombie W.R."/>
            <person name="Paulsen I."/>
            <person name="Potashkin J."/>
            <person name="Shpakovski G.V."/>
            <person name="Ussery D."/>
            <person name="Barrell B.G."/>
            <person name="Nurse P."/>
        </authorList>
    </citation>
    <scope>NUCLEOTIDE SEQUENCE [LARGE SCALE GENOMIC DNA]</scope>
    <source>
        <strain>972 / ATCC 24843</strain>
    </source>
</reference>
<reference key="2">
    <citation type="journal article" date="2006" name="Nat. Biotechnol.">
        <title>ORFeome cloning and global analysis of protein localization in the fission yeast Schizosaccharomyces pombe.</title>
        <authorList>
            <person name="Matsuyama A."/>
            <person name="Arai R."/>
            <person name="Yashiroda Y."/>
            <person name="Shirai A."/>
            <person name="Kamata A."/>
            <person name="Sekido S."/>
            <person name="Kobayashi Y."/>
            <person name="Hashimoto A."/>
            <person name="Hamamoto M."/>
            <person name="Hiraoka Y."/>
            <person name="Horinouchi S."/>
            <person name="Yoshida M."/>
        </authorList>
    </citation>
    <scope>SUBCELLULAR LOCATION [LARGE SCALE ANALYSIS]</scope>
</reference>
<reference key="3">
    <citation type="journal article" date="2008" name="J. Biol. Chem.">
        <title>Characterization of zfs1 as an mRNA-binding and -destabilizing protein in Schizosaccharomyces pombe.</title>
        <authorList>
            <person name="Cuthbertson B.J."/>
            <person name="Liao Y."/>
            <person name="Birnbaumer L."/>
            <person name="Blackshear P.J."/>
        </authorList>
    </citation>
    <scope>GENE NAME</scope>
</reference>
<protein>
    <recommendedName>
        <fullName evidence="2">GTPase-GDP dissociation stimulator arz1</fullName>
    </recommendedName>
</protein>
<comment type="function">
    <text evidence="1 2">Probably acts as a GEF (guanine nucleotide exchange factor) for the Rho family of small GTP-binding proteins (G proteins) that stimulates the dissociation of GDP to enable subsequent binding of GTP (By similarity). May also chaperone the processing and/or trafficking of small GTPases independently of GEF activity (By similarity). May be involved in the control of polarized cell growth via CDC42-mediated signaling (By similarity). May also be involved in the control of cell-wall organization via RHO1-mediated signaling (By similarity).</text>
</comment>
<comment type="subcellular location">
    <subcellularLocation>
        <location evidence="3">Cytoplasm</location>
    </subcellularLocation>
    <subcellularLocation>
        <location evidence="3">Nucleus</location>
    </subcellularLocation>
</comment>
<gene>
    <name evidence="4" type="primary">arz1</name>
    <name evidence="5" type="ORF">SPCC1494.03</name>
</gene>
<feature type="chain" id="PRO_0000116890" description="GTPase-GDP dissociation stimulator arz1">
    <location>
        <begin position="1"/>
        <end position="492"/>
    </location>
</feature>